<organism>
    <name type="scientific">Staphylococcus aureus (strain JH1)</name>
    <dbReference type="NCBI Taxonomy" id="359787"/>
    <lineage>
        <taxon>Bacteria</taxon>
        <taxon>Bacillati</taxon>
        <taxon>Bacillota</taxon>
        <taxon>Bacilli</taxon>
        <taxon>Bacillales</taxon>
        <taxon>Staphylococcaceae</taxon>
        <taxon>Staphylococcus</taxon>
    </lineage>
</organism>
<name>MUTS_STAA2</name>
<protein>
    <recommendedName>
        <fullName evidence="1">DNA mismatch repair protein MutS</fullName>
    </recommendedName>
</protein>
<sequence>MSNVTPMMQQYLKIKSEYQDCLLFFRLGDFYEMFYEDAKEASRVLEITLTKRDAKKENPIPMCGVPYHSADSYIDTLVNNGYKVAICEQMEDPKQTKGMVRREVVRIVTPGTVMEQGGVDDKQNNYILSFVMNQPEIALSYCDVSTGELKVTHFNDEATLLNEITTINPNEVVINDNISDNLKRQINMVTETITVRETLSSEIYSVNQTEHKLMYQATQLLLDYIHHTQKRDLSHIEDVVQYAAIDYMKMDFYAKRNLELTESIRLKSKKGTLLWLMDETKTPMGARRLKQWIDRPLISKEQIEARLDIVDEFSAHFIERDTLRTYLNQVYDIERLVGRVSYGNVNARDLIQLKHSISEIPNIKALLNSMNQNTLVQVNQLEPLDDLLDILEQSLVEEPPISVKDGGLFKVGFNTQLDEYLEASKNGKTWLAELQAKERQRTGIKSLKISFNKVFGYFIEITRANLQNFEPSEFGYMRKQTLSNAERFITDELKEKEDIILGAEDKAIELEYQLFVQLREEVKKYTERLQQQAKIISELDCLQSFAEIAQKYNYTRPSFSENKTLELVESRHPVVERVMDYNDYVPNNCRLDNETFIYLITGPNMSGKSTYMRQVAIISIMAQMGAYVPCKEAVLPIFDQIFTRIGAADDLVSGKSTFMVEMLEAQKALTYATEDSLIIFDEIGRGTSTYDGLALAQAMIEYVAETSHAKTLFSTHYHELTTLDQALPSLKNVHVAANEYKGELIFLHKVKDGAVDDSYGIQVAKLADLPEKVISRAQVILSEFEASAGKKSSISNLKMVENEPEINQENLNLSVEETTDTLSQKDFEQASFDLFENDQESEIELQIKNLNLSNMTPIEALVKLSELQNQLK</sequence>
<proteinExistence type="inferred from homology"/>
<accession>A6U1B4</accession>
<dbReference type="EMBL" id="CP000736">
    <property type="protein sequence ID" value="ABR52232.1"/>
    <property type="molecule type" value="Genomic_DNA"/>
</dbReference>
<dbReference type="SMR" id="A6U1B4"/>
<dbReference type="KEGG" id="sah:SaurJH1_1381"/>
<dbReference type="HOGENOM" id="CLU_002472_4_0_9"/>
<dbReference type="GO" id="GO:0005829">
    <property type="term" value="C:cytosol"/>
    <property type="evidence" value="ECO:0007669"/>
    <property type="project" value="TreeGrafter"/>
</dbReference>
<dbReference type="GO" id="GO:0005524">
    <property type="term" value="F:ATP binding"/>
    <property type="evidence" value="ECO:0007669"/>
    <property type="project" value="UniProtKB-UniRule"/>
</dbReference>
<dbReference type="GO" id="GO:0140664">
    <property type="term" value="F:ATP-dependent DNA damage sensor activity"/>
    <property type="evidence" value="ECO:0007669"/>
    <property type="project" value="InterPro"/>
</dbReference>
<dbReference type="GO" id="GO:0003684">
    <property type="term" value="F:damaged DNA binding"/>
    <property type="evidence" value="ECO:0007669"/>
    <property type="project" value="UniProtKB-UniRule"/>
</dbReference>
<dbReference type="GO" id="GO:0030983">
    <property type="term" value="F:mismatched DNA binding"/>
    <property type="evidence" value="ECO:0007669"/>
    <property type="project" value="InterPro"/>
</dbReference>
<dbReference type="GO" id="GO:0006298">
    <property type="term" value="P:mismatch repair"/>
    <property type="evidence" value="ECO:0007669"/>
    <property type="project" value="UniProtKB-UniRule"/>
</dbReference>
<dbReference type="CDD" id="cd03284">
    <property type="entry name" value="ABC_MutS1"/>
    <property type="match status" value="1"/>
</dbReference>
<dbReference type="FunFam" id="1.10.1420.10:FF:000007">
    <property type="entry name" value="DNA mismatch repair protein MutS"/>
    <property type="match status" value="1"/>
</dbReference>
<dbReference type="FunFam" id="3.40.1170.10:FF:000001">
    <property type="entry name" value="DNA mismatch repair protein MutS"/>
    <property type="match status" value="1"/>
</dbReference>
<dbReference type="FunFam" id="3.40.50.300:FF:000896">
    <property type="entry name" value="DNA mismatch repair protein MutS"/>
    <property type="match status" value="1"/>
</dbReference>
<dbReference type="Gene3D" id="1.10.1420.10">
    <property type="match status" value="2"/>
</dbReference>
<dbReference type="Gene3D" id="3.40.1170.10">
    <property type="entry name" value="DNA repair protein MutS, domain I"/>
    <property type="match status" value="1"/>
</dbReference>
<dbReference type="Gene3D" id="3.30.420.110">
    <property type="entry name" value="MutS, connector domain"/>
    <property type="match status" value="1"/>
</dbReference>
<dbReference type="Gene3D" id="3.40.50.300">
    <property type="entry name" value="P-loop containing nucleotide triphosphate hydrolases"/>
    <property type="match status" value="1"/>
</dbReference>
<dbReference type="HAMAP" id="MF_00096">
    <property type="entry name" value="MutS"/>
    <property type="match status" value="1"/>
</dbReference>
<dbReference type="InterPro" id="IPR005748">
    <property type="entry name" value="DNA_mismatch_repair_MutS"/>
</dbReference>
<dbReference type="InterPro" id="IPR007695">
    <property type="entry name" value="DNA_mismatch_repair_MutS-lik_N"/>
</dbReference>
<dbReference type="InterPro" id="IPR017261">
    <property type="entry name" value="DNA_mismatch_repair_MutS/MSH"/>
</dbReference>
<dbReference type="InterPro" id="IPR000432">
    <property type="entry name" value="DNA_mismatch_repair_MutS_C"/>
</dbReference>
<dbReference type="InterPro" id="IPR007861">
    <property type="entry name" value="DNA_mismatch_repair_MutS_clamp"/>
</dbReference>
<dbReference type="InterPro" id="IPR007696">
    <property type="entry name" value="DNA_mismatch_repair_MutS_core"/>
</dbReference>
<dbReference type="InterPro" id="IPR016151">
    <property type="entry name" value="DNA_mismatch_repair_MutS_N"/>
</dbReference>
<dbReference type="InterPro" id="IPR036187">
    <property type="entry name" value="DNA_mismatch_repair_MutS_sf"/>
</dbReference>
<dbReference type="InterPro" id="IPR007860">
    <property type="entry name" value="DNA_mmatch_repair_MutS_con_dom"/>
</dbReference>
<dbReference type="InterPro" id="IPR045076">
    <property type="entry name" value="MutS"/>
</dbReference>
<dbReference type="InterPro" id="IPR036678">
    <property type="entry name" value="MutS_con_dom_sf"/>
</dbReference>
<dbReference type="InterPro" id="IPR027417">
    <property type="entry name" value="P-loop_NTPase"/>
</dbReference>
<dbReference type="NCBIfam" id="TIGR01070">
    <property type="entry name" value="mutS1"/>
    <property type="match status" value="1"/>
</dbReference>
<dbReference type="NCBIfam" id="NF003810">
    <property type="entry name" value="PRK05399.1"/>
    <property type="match status" value="1"/>
</dbReference>
<dbReference type="PANTHER" id="PTHR11361:SF34">
    <property type="entry name" value="DNA MISMATCH REPAIR PROTEIN MSH1, MITOCHONDRIAL"/>
    <property type="match status" value="1"/>
</dbReference>
<dbReference type="PANTHER" id="PTHR11361">
    <property type="entry name" value="DNA MISMATCH REPAIR PROTEIN MUTS FAMILY MEMBER"/>
    <property type="match status" value="1"/>
</dbReference>
<dbReference type="Pfam" id="PF01624">
    <property type="entry name" value="MutS_I"/>
    <property type="match status" value="1"/>
</dbReference>
<dbReference type="Pfam" id="PF05188">
    <property type="entry name" value="MutS_II"/>
    <property type="match status" value="1"/>
</dbReference>
<dbReference type="Pfam" id="PF05192">
    <property type="entry name" value="MutS_III"/>
    <property type="match status" value="1"/>
</dbReference>
<dbReference type="Pfam" id="PF05190">
    <property type="entry name" value="MutS_IV"/>
    <property type="match status" value="1"/>
</dbReference>
<dbReference type="Pfam" id="PF00488">
    <property type="entry name" value="MutS_V"/>
    <property type="match status" value="1"/>
</dbReference>
<dbReference type="PIRSF" id="PIRSF037677">
    <property type="entry name" value="DNA_mis_repair_Msh6"/>
    <property type="match status" value="1"/>
</dbReference>
<dbReference type="SMART" id="SM00534">
    <property type="entry name" value="MUTSac"/>
    <property type="match status" value="1"/>
</dbReference>
<dbReference type="SMART" id="SM00533">
    <property type="entry name" value="MUTSd"/>
    <property type="match status" value="1"/>
</dbReference>
<dbReference type="SUPFAM" id="SSF55271">
    <property type="entry name" value="DNA repair protein MutS, domain I"/>
    <property type="match status" value="1"/>
</dbReference>
<dbReference type="SUPFAM" id="SSF53150">
    <property type="entry name" value="DNA repair protein MutS, domain II"/>
    <property type="match status" value="1"/>
</dbReference>
<dbReference type="SUPFAM" id="SSF48334">
    <property type="entry name" value="DNA repair protein MutS, domain III"/>
    <property type="match status" value="1"/>
</dbReference>
<dbReference type="SUPFAM" id="SSF52540">
    <property type="entry name" value="P-loop containing nucleoside triphosphate hydrolases"/>
    <property type="match status" value="1"/>
</dbReference>
<dbReference type="PROSITE" id="PS00486">
    <property type="entry name" value="DNA_MISMATCH_REPAIR_2"/>
    <property type="match status" value="1"/>
</dbReference>
<gene>
    <name evidence="1" type="primary">mutS</name>
    <name type="ordered locus">SaurJH1_1381</name>
</gene>
<keyword id="KW-0067">ATP-binding</keyword>
<keyword id="KW-0227">DNA damage</keyword>
<keyword id="KW-0234">DNA repair</keyword>
<keyword id="KW-0238">DNA-binding</keyword>
<keyword id="KW-0547">Nucleotide-binding</keyword>
<reference key="1">
    <citation type="submission" date="2007-06" db="EMBL/GenBank/DDBJ databases">
        <title>Complete sequence of chromosome of Staphylococcus aureus subsp. aureus JH1.</title>
        <authorList>
            <consortium name="US DOE Joint Genome Institute"/>
            <person name="Copeland A."/>
            <person name="Lucas S."/>
            <person name="Lapidus A."/>
            <person name="Barry K."/>
            <person name="Detter J.C."/>
            <person name="Glavina del Rio T."/>
            <person name="Hammon N."/>
            <person name="Israni S."/>
            <person name="Dalin E."/>
            <person name="Tice H."/>
            <person name="Pitluck S."/>
            <person name="Chain P."/>
            <person name="Malfatti S."/>
            <person name="Shin M."/>
            <person name="Vergez L."/>
            <person name="Schmutz J."/>
            <person name="Larimer F."/>
            <person name="Land M."/>
            <person name="Hauser L."/>
            <person name="Kyrpides N."/>
            <person name="Ivanova N."/>
            <person name="Tomasz A."/>
            <person name="Richardson P."/>
        </authorList>
    </citation>
    <scope>NUCLEOTIDE SEQUENCE [LARGE SCALE GENOMIC DNA]</scope>
    <source>
        <strain>JH1</strain>
    </source>
</reference>
<evidence type="ECO:0000255" key="1">
    <source>
        <dbReference type="HAMAP-Rule" id="MF_00096"/>
    </source>
</evidence>
<feature type="chain" id="PRO_1000075564" description="DNA mismatch repair protein MutS">
    <location>
        <begin position="1"/>
        <end position="872"/>
    </location>
</feature>
<feature type="binding site" evidence="1">
    <location>
        <begin position="602"/>
        <end position="609"/>
    </location>
    <ligand>
        <name>ATP</name>
        <dbReference type="ChEBI" id="CHEBI:30616"/>
    </ligand>
</feature>
<comment type="function">
    <text evidence="1">This protein is involved in the repair of mismatches in DNA. It is possible that it carries out the mismatch recognition step. This protein has a weak ATPase activity.</text>
</comment>
<comment type="similarity">
    <text evidence="1">Belongs to the DNA mismatch repair MutS family.</text>
</comment>